<comment type="function">
    <text>Lysozymes have primarily a bacteriolytic function; those in tissues and body fluids are associated with the monocyte-macrophage system and enhance the activity of immunoagents.</text>
</comment>
<comment type="catalytic activity">
    <reaction>
        <text>Hydrolysis of (1-&gt;4)-beta-linkages between N-acetylmuramic acid and N-acetyl-D-glucosamine residues in a peptidoglycan and between N-acetyl-D-glucosamine residues in chitodextrins.</text>
        <dbReference type="EC" id="3.2.1.17"/>
    </reaction>
</comment>
<comment type="subunit">
    <text>Monomer.</text>
</comment>
<comment type="subcellular location">
    <subcellularLocation>
        <location>Secreted</location>
    </subcellularLocation>
</comment>
<comment type="miscellaneous">
    <text>Lysozyme C is capable of both hydrolysis and transglycosylation; it also shows a slight esterase activity. It acts rapidly on both peptide-substituted and unsubstituted peptidoglycan, and slowly on chitin oligosaccharides.</text>
</comment>
<comment type="similarity">
    <text evidence="1">Belongs to the glycosyl hydrolase 22 family.</text>
</comment>
<accession>P12068</accession>
<dbReference type="EC" id="3.2.1.17"/>
<dbReference type="EMBL" id="U28757">
    <property type="protein sequence ID" value="AAB16862.1"/>
    <property type="molecule type" value="Genomic_DNA"/>
</dbReference>
<dbReference type="RefSeq" id="NP_999557.2">
    <property type="nucleotide sequence ID" value="NM_214392.2"/>
</dbReference>
<dbReference type="SMR" id="P12068"/>
<dbReference type="FunCoup" id="P12068">
    <property type="interactions" value="56"/>
</dbReference>
<dbReference type="STRING" id="9823.ENSSSCP00000042981"/>
<dbReference type="CAZy" id="GH22">
    <property type="family name" value="Glycoside Hydrolase Family 22"/>
</dbReference>
<dbReference type="PaxDb" id="9823-ENSSSCP00000000522"/>
<dbReference type="PeptideAtlas" id="P12068"/>
<dbReference type="Ensembl" id="ENSSSCT00090021226">
    <property type="protein sequence ID" value="ENSSSCP00090013068"/>
    <property type="gene ID" value="ENSSSCG00090012072"/>
</dbReference>
<dbReference type="Ensembl" id="ENSSSCT00110062318">
    <property type="protein sequence ID" value="ENSSSCP00110043593"/>
    <property type="gene ID" value="ENSSSCG00110032649"/>
</dbReference>
<dbReference type="GeneID" id="100157211"/>
<dbReference type="KEGG" id="ssc:100157211"/>
<dbReference type="CTD" id="4069"/>
<dbReference type="eggNOG" id="ENOG502S1S1">
    <property type="taxonomic scope" value="Eukaryota"/>
</dbReference>
<dbReference type="HOGENOM" id="CLU_111620_0_1_1"/>
<dbReference type="InParanoid" id="P12068"/>
<dbReference type="OrthoDB" id="17373at2759"/>
<dbReference type="TreeFam" id="TF324882"/>
<dbReference type="Proteomes" id="UP000008227">
    <property type="component" value="Unplaced"/>
</dbReference>
<dbReference type="Proteomes" id="UP000314985">
    <property type="component" value="Unplaced"/>
</dbReference>
<dbReference type="Proteomes" id="UP000694570">
    <property type="component" value="Unplaced"/>
</dbReference>
<dbReference type="Proteomes" id="UP000694571">
    <property type="component" value="Unplaced"/>
</dbReference>
<dbReference type="Proteomes" id="UP000694720">
    <property type="component" value="Unplaced"/>
</dbReference>
<dbReference type="Proteomes" id="UP000694722">
    <property type="component" value="Unplaced"/>
</dbReference>
<dbReference type="Proteomes" id="UP000694723">
    <property type="component" value="Unplaced"/>
</dbReference>
<dbReference type="Proteomes" id="UP000694724">
    <property type="component" value="Unplaced"/>
</dbReference>
<dbReference type="Proteomes" id="UP000694725">
    <property type="component" value="Unplaced"/>
</dbReference>
<dbReference type="Proteomes" id="UP000694726">
    <property type="component" value="Unplaced"/>
</dbReference>
<dbReference type="Proteomes" id="UP000694727">
    <property type="component" value="Unplaced"/>
</dbReference>
<dbReference type="Proteomes" id="UP000694728">
    <property type="component" value="Unplaced"/>
</dbReference>
<dbReference type="GO" id="GO:0005576">
    <property type="term" value="C:extracellular region"/>
    <property type="evidence" value="ECO:0007669"/>
    <property type="project" value="UniProtKB-SubCell"/>
</dbReference>
<dbReference type="GO" id="GO:0003796">
    <property type="term" value="F:lysozyme activity"/>
    <property type="evidence" value="ECO:0000318"/>
    <property type="project" value="GO_Central"/>
</dbReference>
<dbReference type="GO" id="GO:0050829">
    <property type="term" value="P:defense response to Gram-negative bacterium"/>
    <property type="evidence" value="ECO:0000318"/>
    <property type="project" value="GO_Central"/>
</dbReference>
<dbReference type="GO" id="GO:0050830">
    <property type="term" value="P:defense response to Gram-positive bacterium"/>
    <property type="evidence" value="ECO:0000318"/>
    <property type="project" value="GO_Central"/>
</dbReference>
<dbReference type="GO" id="GO:0007586">
    <property type="term" value="P:digestion"/>
    <property type="evidence" value="ECO:0007669"/>
    <property type="project" value="UniProtKB-KW"/>
</dbReference>
<dbReference type="GO" id="GO:0031640">
    <property type="term" value="P:killing of cells of another organism"/>
    <property type="evidence" value="ECO:0007669"/>
    <property type="project" value="UniProtKB-KW"/>
</dbReference>
<dbReference type="CDD" id="cd16897">
    <property type="entry name" value="LYZ_C"/>
    <property type="match status" value="1"/>
</dbReference>
<dbReference type="FunFam" id="1.10.530.10:FF:000001">
    <property type="entry name" value="Lysozyme C"/>
    <property type="match status" value="1"/>
</dbReference>
<dbReference type="Gene3D" id="1.10.530.10">
    <property type="match status" value="1"/>
</dbReference>
<dbReference type="InterPro" id="IPR001916">
    <property type="entry name" value="Glyco_hydro_22"/>
</dbReference>
<dbReference type="InterPro" id="IPR019799">
    <property type="entry name" value="Glyco_hydro_22_CS"/>
</dbReference>
<dbReference type="InterPro" id="IPR000974">
    <property type="entry name" value="Glyco_hydro_22_lys"/>
</dbReference>
<dbReference type="InterPro" id="IPR023346">
    <property type="entry name" value="Lysozyme-like_dom_sf"/>
</dbReference>
<dbReference type="PANTHER" id="PTHR11407">
    <property type="entry name" value="LYSOZYME C"/>
    <property type="match status" value="1"/>
</dbReference>
<dbReference type="PANTHER" id="PTHR11407:SF28">
    <property type="entry name" value="LYSOZYME C"/>
    <property type="match status" value="1"/>
</dbReference>
<dbReference type="Pfam" id="PF00062">
    <property type="entry name" value="Lys"/>
    <property type="match status" value="1"/>
</dbReference>
<dbReference type="PRINTS" id="PR00137">
    <property type="entry name" value="LYSOZYME"/>
</dbReference>
<dbReference type="PRINTS" id="PR00135">
    <property type="entry name" value="LYZLACT"/>
</dbReference>
<dbReference type="SMART" id="SM00263">
    <property type="entry name" value="LYZ1"/>
    <property type="match status" value="1"/>
</dbReference>
<dbReference type="SUPFAM" id="SSF53955">
    <property type="entry name" value="Lysozyme-like"/>
    <property type="match status" value="1"/>
</dbReference>
<dbReference type="PROSITE" id="PS00128">
    <property type="entry name" value="GLYCOSYL_HYDROL_F22_1"/>
    <property type="match status" value="1"/>
</dbReference>
<dbReference type="PROSITE" id="PS51348">
    <property type="entry name" value="GLYCOSYL_HYDROL_F22_2"/>
    <property type="match status" value="1"/>
</dbReference>
<proteinExistence type="evidence at protein level"/>
<feature type="signal peptide" evidence="2">
    <location>
        <begin position="1"/>
        <end position="18"/>
    </location>
</feature>
<feature type="chain" id="PRO_0000018479" description="Lysozyme C-2">
    <location>
        <begin position="19"/>
        <end position="146"/>
    </location>
</feature>
<feature type="domain" description="C-type lysozyme" evidence="1">
    <location>
        <begin position="19"/>
        <end position="146"/>
    </location>
</feature>
<feature type="active site" evidence="1">
    <location>
        <position position="53"/>
    </location>
</feature>
<feature type="active site" evidence="1">
    <location>
        <position position="69"/>
    </location>
</feature>
<feature type="disulfide bond" evidence="1">
    <location>
        <begin position="24"/>
        <end position="144"/>
    </location>
</feature>
<feature type="disulfide bond" evidence="1">
    <location>
        <begin position="48"/>
        <end position="132"/>
    </location>
</feature>
<feature type="disulfide bond" evidence="1">
    <location>
        <begin position="81"/>
        <end position="97"/>
    </location>
</feature>
<feature type="disulfide bond" evidence="1">
    <location>
        <begin position="93"/>
        <end position="111"/>
    </location>
</feature>
<organism>
    <name type="scientific">Sus scrofa</name>
    <name type="common">Pig</name>
    <dbReference type="NCBI Taxonomy" id="9823"/>
    <lineage>
        <taxon>Eukaryota</taxon>
        <taxon>Metazoa</taxon>
        <taxon>Chordata</taxon>
        <taxon>Craniata</taxon>
        <taxon>Vertebrata</taxon>
        <taxon>Euteleostomi</taxon>
        <taxon>Mammalia</taxon>
        <taxon>Eutheria</taxon>
        <taxon>Laurasiatheria</taxon>
        <taxon>Artiodactyla</taxon>
        <taxon>Suina</taxon>
        <taxon>Suidae</taxon>
        <taxon>Sus</taxon>
    </lineage>
</organism>
<protein>
    <recommendedName>
        <fullName>Lysozyme C-2</fullName>
        <ecNumber>3.2.1.17</ecNumber>
    </recommendedName>
    <alternativeName>
        <fullName>1,4-beta-N-acetylmuramidase C</fullName>
    </alternativeName>
</protein>
<sequence length="146" mass="16484">MKTLLVLALLLLSVSVQAKVYDRCEFARILKKSGMDGYRGVSLANWVCLAKWESDFNTKAINHNVGSTDYGIFQINSRYWCNDGKTPKAVNACHISCKVLLDDDLSQDIECAKRVVRDPLGVKAWVAWRAHCQNKDVSQYIRGCKL</sequence>
<evidence type="ECO:0000255" key="1">
    <source>
        <dbReference type="PROSITE-ProRule" id="PRU00680"/>
    </source>
</evidence>
<evidence type="ECO:0000269" key="2">
    <source>
    </source>
</evidence>
<keyword id="KW-0929">Antimicrobial</keyword>
<keyword id="KW-0081">Bacteriolytic enzyme</keyword>
<keyword id="KW-0222">Digestion</keyword>
<keyword id="KW-0903">Direct protein sequencing</keyword>
<keyword id="KW-1015">Disulfide bond</keyword>
<keyword id="KW-0326">Glycosidase</keyword>
<keyword id="KW-0378">Hydrolase</keyword>
<keyword id="KW-1185">Reference proteome</keyword>
<keyword id="KW-0964">Secreted</keyword>
<keyword id="KW-0732">Signal</keyword>
<name>LYSC2_PIG</name>
<reference key="1">
    <citation type="journal article" date="1996" name="Mol. Phylogenet. Evol.">
        <title>Evolution of stomach lysozyme: the pig lysozyme gene.</title>
        <authorList>
            <person name="Yu M."/>
            <person name="Irwin D.M."/>
        </authorList>
    </citation>
    <scope>NUCLEOTIDE SEQUENCE [GENOMIC DNA]</scope>
</reference>
<reference key="2">
    <citation type="journal article" date="1989" name="J. Mol. Evol.">
        <title>Episodic evolution in the stomach lysozymes of ruminants.</title>
        <authorList>
            <person name="Jolles J."/>
            <person name="Jolles P."/>
            <person name="Bowman B.H."/>
            <person name="Prager E.M."/>
            <person name="Stewart C.-B."/>
            <person name="Wilson A.C."/>
        </authorList>
    </citation>
    <scope>PROTEIN SEQUENCE OF 19-146</scope>
    <source>
        <tissue>Stomach</tissue>
    </source>
</reference>